<organism>
    <name type="scientific">Verminephrobacter eiseniae (strain EF01-2)</name>
    <dbReference type="NCBI Taxonomy" id="391735"/>
    <lineage>
        <taxon>Bacteria</taxon>
        <taxon>Pseudomonadati</taxon>
        <taxon>Pseudomonadota</taxon>
        <taxon>Betaproteobacteria</taxon>
        <taxon>Burkholderiales</taxon>
        <taxon>Comamonadaceae</taxon>
        <taxon>Verminephrobacter</taxon>
    </lineage>
</organism>
<sequence>MKLLIVAVGQRVPDWAQTACNDYAKRLPPELKLELKAVKTEPRAGKTLASLLAAERGRIEAAIPRGAQVVALDERGTRLTTLALAERLRGWQLVGDTVALLVGGPDGLDPALRQAAHERIRLSDLTLPHALVRVLLIEQLYRAWSLHAGHPYHRE</sequence>
<reference key="1">
    <citation type="submission" date="2006-12" db="EMBL/GenBank/DDBJ databases">
        <title>Complete sequence of chromosome 1 of Verminephrobacter eiseniae EF01-2.</title>
        <authorList>
            <person name="Copeland A."/>
            <person name="Lucas S."/>
            <person name="Lapidus A."/>
            <person name="Barry K."/>
            <person name="Detter J.C."/>
            <person name="Glavina del Rio T."/>
            <person name="Dalin E."/>
            <person name="Tice H."/>
            <person name="Pitluck S."/>
            <person name="Chertkov O."/>
            <person name="Brettin T."/>
            <person name="Bruce D."/>
            <person name="Han C."/>
            <person name="Tapia R."/>
            <person name="Gilna P."/>
            <person name="Schmutz J."/>
            <person name="Larimer F."/>
            <person name="Land M."/>
            <person name="Hauser L."/>
            <person name="Kyrpides N."/>
            <person name="Kim E."/>
            <person name="Stahl D."/>
            <person name="Richardson P."/>
        </authorList>
    </citation>
    <scope>NUCLEOTIDE SEQUENCE [LARGE SCALE GENOMIC DNA]</scope>
    <source>
        <strain>EF01-2</strain>
    </source>
</reference>
<dbReference type="EC" id="2.1.1.177" evidence="1"/>
<dbReference type="EMBL" id="CP000542">
    <property type="protein sequence ID" value="ABM58367.1"/>
    <property type="molecule type" value="Genomic_DNA"/>
</dbReference>
<dbReference type="RefSeq" id="WP_011810368.1">
    <property type="nucleotide sequence ID" value="NC_008786.1"/>
</dbReference>
<dbReference type="SMR" id="A1WL60"/>
<dbReference type="STRING" id="391735.Veis_2624"/>
<dbReference type="GeneID" id="76461138"/>
<dbReference type="KEGG" id="vei:Veis_2624"/>
<dbReference type="eggNOG" id="COG1576">
    <property type="taxonomic scope" value="Bacteria"/>
</dbReference>
<dbReference type="HOGENOM" id="CLU_100552_1_0_4"/>
<dbReference type="OrthoDB" id="9806643at2"/>
<dbReference type="Proteomes" id="UP000000374">
    <property type="component" value="Chromosome"/>
</dbReference>
<dbReference type="GO" id="GO:0005737">
    <property type="term" value="C:cytoplasm"/>
    <property type="evidence" value="ECO:0007669"/>
    <property type="project" value="UniProtKB-SubCell"/>
</dbReference>
<dbReference type="GO" id="GO:0070038">
    <property type="term" value="F:rRNA (pseudouridine-N3-)-methyltransferase activity"/>
    <property type="evidence" value="ECO:0007669"/>
    <property type="project" value="UniProtKB-UniRule"/>
</dbReference>
<dbReference type="CDD" id="cd18081">
    <property type="entry name" value="RlmH-like"/>
    <property type="match status" value="1"/>
</dbReference>
<dbReference type="Gene3D" id="3.40.1280.10">
    <property type="match status" value="1"/>
</dbReference>
<dbReference type="HAMAP" id="MF_00658">
    <property type="entry name" value="23SrRNA_methyltr_H"/>
    <property type="match status" value="1"/>
</dbReference>
<dbReference type="InterPro" id="IPR029028">
    <property type="entry name" value="Alpha/beta_knot_MTases"/>
</dbReference>
<dbReference type="InterPro" id="IPR003742">
    <property type="entry name" value="RlmH-like"/>
</dbReference>
<dbReference type="InterPro" id="IPR029026">
    <property type="entry name" value="tRNA_m1G_MTases_N"/>
</dbReference>
<dbReference type="NCBIfam" id="NF000986">
    <property type="entry name" value="PRK00103.1-4"/>
    <property type="match status" value="1"/>
</dbReference>
<dbReference type="PANTHER" id="PTHR33603">
    <property type="entry name" value="METHYLTRANSFERASE"/>
    <property type="match status" value="1"/>
</dbReference>
<dbReference type="PANTHER" id="PTHR33603:SF1">
    <property type="entry name" value="RIBOSOMAL RNA LARGE SUBUNIT METHYLTRANSFERASE H"/>
    <property type="match status" value="1"/>
</dbReference>
<dbReference type="Pfam" id="PF02590">
    <property type="entry name" value="SPOUT_MTase"/>
    <property type="match status" value="1"/>
</dbReference>
<dbReference type="PIRSF" id="PIRSF004505">
    <property type="entry name" value="MT_bac"/>
    <property type="match status" value="1"/>
</dbReference>
<dbReference type="SUPFAM" id="SSF75217">
    <property type="entry name" value="alpha/beta knot"/>
    <property type="match status" value="1"/>
</dbReference>
<comment type="function">
    <text evidence="1">Specifically methylates the pseudouridine at position 1915 (m3Psi1915) in 23S rRNA.</text>
</comment>
<comment type="catalytic activity">
    <reaction evidence="1">
        <text>pseudouridine(1915) in 23S rRNA + S-adenosyl-L-methionine = N(3)-methylpseudouridine(1915) in 23S rRNA + S-adenosyl-L-homocysteine + H(+)</text>
        <dbReference type="Rhea" id="RHEA:42752"/>
        <dbReference type="Rhea" id="RHEA-COMP:10221"/>
        <dbReference type="Rhea" id="RHEA-COMP:10222"/>
        <dbReference type="ChEBI" id="CHEBI:15378"/>
        <dbReference type="ChEBI" id="CHEBI:57856"/>
        <dbReference type="ChEBI" id="CHEBI:59789"/>
        <dbReference type="ChEBI" id="CHEBI:65314"/>
        <dbReference type="ChEBI" id="CHEBI:74486"/>
        <dbReference type="EC" id="2.1.1.177"/>
    </reaction>
</comment>
<comment type="subunit">
    <text evidence="1">Homodimer.</text>
</comment>
<comment type="subcellular location">
    <subcellularLocation>
        <location evidence="1">Cytoplasm</location>
    </subcellularLocation>
</comment>
<comment type="similarity">
    <text evidence="1">Belongs to the RNA methyltransferase RlmH family.</text>
</comment>
<feature type="chain" id="PRO_1000061854" description="Ribosomal RNA large subunit methyltransferase H">
    <location>
        <begin position="1"/>
        <end position="155"/>
    </location>
</feature>
<feature type="binding site" evidence="1">
    <location>
        <position position="72"/>
    </location>
    <ligand>
        <name>S-adenosyl-L-methionine</name>
        <dbReference type="ChEBI" id="CHEBI:59789"/>
    </ligand>
</feature>
<feature type="binding site" evidence="1">
    <location>
        <position position="103"/>
    </location>
    <ligand>
        <name>S-adenosyl-L-methionine</name>
        <dbReference type="ChEBI" id="CHEBI:59789"/>
    </ligand>
</feature>
<feature type="binding site" evidence="1">
    <location>
        <begin position="122"/>
        <end position="127"/>
    </location>
    <ligand>
        <name>S-adenosyl-L-methionine</name>
        <dbReference type="ChEBI" id="CHEBI:59789"/>
    </ligand>
</feature>
<accession>A1WL60</accession>
<name>RLMH_VEREI</name>
<protein>
    <recommendedName>
        <fullName evidence="1">Ribosomal RNA large subunit methyltransferase H</fullName>
        <ecNumber evidence="1">2.1.1.177</ecNumber>
    </recommendedName>
    <alternativeName>
        <fullName evidence="1">23S rRNA (pseudouridine1915-N3)-methyltransferase</fullName>
    </alternativeName>
    <alternativeName>
        <fullName evidence="1">23S rRNA m3Psi1915 methyltransferase</fullName>
    </alternativeName>
    <alternativeName>
        <fullName evidence="1">rRNA (pseudouridine-N3-)-methyltransferase RlmH</fullName>
    </alternativeName>
</protein>
<proteinExistence type="inferred from homology"/>
<gene>
    <name evidence="1" type="primary">rlmH</name>
    <name type="ordered locus">Veis_2624</name>
</gene>
<evidence type="ECO:0000255" key="1">
    <source>
        <dbReference type="HAMAP-Rule" id="MF_00658"/>
    </source>
</evidence>
<keyword id="KW-0963">Cytoplasm</keyword>
<keyword id="KW-0489">Methyltransferase</keyword>
<keyword id="KW-1185">Reference proteome</keyword>
<keyword id="KW-0698">rRNA processing</keyword>
<keyword id="KW-0949">S-adenosyl-L-methionine</keyword>
<keyword id="KW-0808">Transferase</keyword>